<keyword id="KW-0131">Cell cycle</keyword>
<keyword id="KW-0132">Cell division</keyword>
<keyword id="KW-0342">GTP-binding</keyword>
<keyword id="KW-0460">Magnesium</keyword>
<keyword id="KW-0479">Metal-binding</keyword>
<keyword id="KW-0547">Nucleotide-binding</keyword>
<keyword id="KW-0717">Septation</keyword>
<reference key="1">
    <citation type="submission" date="2008-05" db="EMBL/GenBank/DDBJ databases">
        <title>Complete sequence of chromosome 1 of Ralstonia pickettii 12J.</title>
        <authorList>
            <person name="Lucas S."/>
            <person name="Copeland A."/>
            <person name="Lapidus A."/>
            <person name="Glavina del Rio T."/>
            <person name="Dalin E."/>
            <person name="Tice H."/>
            <person name="Bruce D."/>
            <person name="Goodwin L."/>
            <person name="Pitluck S."/>
            <person name="Meincke L."/>
            <person name="Brettin T."/>
            <person name="Detter J.C."/>
            <person name="Han C."/>
            <person name="Kuske C.R."/>
            <person name="Schmutz J."/>
            <person name="Larimer F."/>
            <person name="Land M."/>
            <person name="Hauser L."/>
            <person name="Kyrpides N."/>
            <person name="Mikhailova N."/>
            <person name="Marsh T."/>
            <person name="Richardson P."/>
        </authorList>
    </citation>
    <scope>NUCLEOTIDE SEQUENCE [LARGE SCALE GENOMIC DNA]</scope>
    <source>
        <strain>12J</strain>
    </source>
</reference>
<accession>B2UEI8</accession>
<feature type="chain" id="PRO_1000115996" description="Probable GTP-binding protein EngB">
    <location>
        <begin position="1"/>
        <end position="233"/>
    </location>
</feature>
<feature type="domain" description="EngB-type G" evidence="1">
    <location>
        <begin position="23"/>
        <end position="209"/>
    </location>
</feature>
<feature type="binding site" evidence="1">
    <location>
        <begin position="31"/>
        <end position="38"/>
    </location>
    <ligand>
        <name>GTP</name>
        <dbReference type="ChEBI" id="CHEBI:37565"/>
    </ligand>
</feature>
<feature type="binding site" evidence="1">
    <location>
        <position position="38"/>
    </location>
    <ligand>
        <name>Mg(2+)</name>
        <dbReference type="ChEBI" id="CHEBI:18420"/>
    </ligand>
</feature>
<feature type="binding site" evidence="1">
    <location>
        <begin position="58"/>
        <end position="62"/>
    </location>
    <ligand>
        <name>GTP</name>
        <dbReference type="ChEBI" id="CHEBI:37565"/>
    </ligand>
</feature>
<feature type="binding site" evidence="1">
    <location>
        <position position="60"/>
    </location>
    <ligand>
        <name>Mg(2+)</name>
        <dbReference type="ChEBI" id="CHEBI:18420"/>
    </ligand>
</feature>
<feature type="binding site" evidence="1">
    <location>
        <begin position="82"/>
        <end position="85"/>
    </location>
    <ligand>
        <name>GTP</name>
        <dbReference type="ChEBI" id="CHEBI:37565"/>
    </ligand>
</feature>
<feature type="binding site" evidence="1">
    <location>
        <begin position="149"/>
        <end position="152"/>
    </location>
    <ligand>
        <name>GTP</name>
        <dbReference type="ChEBI" id="CHEBI:37565"/>
    </ligand>
</feature>
<feature type="binding site" evidence="1">
    <location>
        <begin position="188"/>
        <end position="190"/>
    </location>
    <ligand>
        <name>GTP</name>
        <dbReference type="ChEBI" id="CHEBI:37565"/>
    </ligand>
</feature>
<proteinExistence type="inferred from homology"/>
<sequence length="233" mass="25693">MSLLHQARFFITVNHLRDLPATAVPEVAFAGRSNAGKSTAINILCNQKRLAFSSKTPGRTQHINYFSVMPAKAEDPLGFLVDLPGYGYAEAPGETKSHWVHLLGDYVKARQQLAGLVIMMDARRPFTDLDCQMVEWFLPTGKPIHVLLTKADKLTNNDASRALMAARKVLADYRAQIDGDVSLTVQLFSSLKRRGIEEAQRIVAGWLCLPEALEAEPQAEPAKKTPSPNAQRG</sequence>
<comment type="function">
    <text evidence="1">Necessary for normal cell division and for the maintenance of normal septation.</text>
</comment>
<comment type="cofactor">
    <cofactor evidence="1">
        <name>Mg(2+)</name>
        <dbReference type="ChEBI" id="CHEBI:18420"/>
    </cofactor>
</comment>
<comment type="similarity">
    <text evidence="1">Belongs to the TRAFAC class TrmE-Era-EngA-EngB-Septin-like GTPase superfamily. EngB GTPase family.</text>
</comment>
<evidence type="ECO:0000255" key="1">
    <source>
        <dbReference type="HAMAP-Rule" id="MF_00321"/>
    </source>
</evidence>
<gene>
    <name evidence="1" type="primary">engB</name>
    <name type="ordered locus">Rpic_3266</name>
</gene>
<organism>
    <name type="scientific">Ralstonia pickettii (strain 12J)</name>
    <dbReference type="NCBI Taxonomy" id="402626"/>
    <lineage>
        <taxon>Bacteria</taxon>
        <taxon>Pseudomonadati</taxon>
        <taxon>Pseudomonadota</taxon>
        <taxon>Betaproteobacteria</taxon>
        <taxon>Burkholderiales</taxon>
        <taxon>Burkholderiaceae</taxon>
        <taxon>Ralstonia</taxon>
    </lineage>
</organism>
<name>ENGB_RALPJ</name>
<protein>
    <recommendedName>
        <fullName evidence="1">Probable GTP-binding protein EngB</fullName>
    </recommendedName>
</protein>
<dbReference type="EMBL" id="CP001068">
    <property type="protein sequence ID" value="ACD28388.1"/>
    <property type="molecule type" value="Genomic_DNA"/>
</dbReference>
<dbReference type="SMR" id="B2UEI8"/>
<dbReference type="STRING" id="402626.Rpic_3266"/>
<dbReference type="KEGG" id="rpi:Rpic_3266"/>
<dbReference type="PATRIC" id="fig|402626.5.peg.4400"/>
<dbReference type="eggNOG" id="COG0218">
    <property type="taxonomic scope" value="Bacteria"/>
</dbReference>
<dbReference type="HOGENOM" id="CLU_033732_1_1_4"/>
<dbReference type="GO" id="GO:0005829">
    <property type="term" value="C:cytosol"/>
    <property type="evidence" value="ECO:0007669"/>
    <property type="project" value="TreeGrafter"/>
</dbReference>
<dbReference type="GO" id="GO:0005525">
    <property type="term" value="F:GTP binding"/>
    <property type="evidence" value="ECO:0007669"/>
    <property type="project" value="UniProtKB-UniRule"/>
</dbReference>
<dbReference type="GO" id="GO:0046872">
    <property type="term" value="F:metal ion binding"/>
    <property type="evidence" value="ECO:0007669"/>
    <property type="project" value="UniProtKB-KW"/>
</dbReference>
<dbReference type="GO" id="GO:0000917">
    <property type="term" value="P:division septum assembly"/>
    <property type="evidence" value="ECO:0007669"/>
    <property type="project" value="UniProtKB-KW"/>
</dbReference>
<dbReference type="CDD" id="cd01876">
    <property type="entry name" value="YihA_EngB"/>
    <property type="match status" value="1"/>
</dbReference>
<dbReference type="FunFam" id="3.40.50.300:FF:000098">
    <property type="entry name" value="Probable GTP-binding protein EngB"/>
    <property type="match status" value="1"/>
</dbReference>
<dbReference type="Gene3D" id="3.40.50.300">
    <property type="entry name" value="P-loop containing nucleotide triphosphate hydrolases"/>
    <property type="match status" value="1"/>
</dbReference>
<dbReference type="HAMAP" id="MF_00321">
    <property type="entry name" value="GTPase_EngB"/>
    <property type="match status" value="1"/>
</dbReference>
<dbReference type="InterPro" id="IPR030393">
    <property type="entry name" value="G_ENGB_dom"/>
</dbReference>
<dbReference type="InterPro" id="IPR006073">
    <property type="entry name" value="GTP-bd"/>
</dbReference>
<dbReference type="InterPro" id="IPR019987">
    <property type="entry name" value="GTP-bd_ribosome_bio_YsxC"/>
</dbReference>
<dbReference type="InterPro" id="IPR027417">
    <property type="entry name" value="P-loop_NTPase"/>
</dbReference>
<dbReference type="NCBIfam" id="TIGR03598">
    <property type="entry name" value="GTPase_YsxC"/>
    <property type="match status" value="1"/>
</dbReference>
<dbReference type="PANTHER" id="PTHR11649:SF13">
    <property type="entry name" value="ENGB-TYPE G DOMAIN-CONTAINING PROTEIN"/>
    <property type="match status" value="1"/>
</dbReference>
<dbReference type="PANTHER" id="PTHR11649">
    <property type="entry name" value="MSS1/TRME-RELATED GTP-BINDING PROTEIN"/>
    <property type="match status" value="1"/>
</dbReference>
<dbReference type="Pfam" id="PF01926">
    <property type="entry name" value="MMR_HSR1"/>
    <property type="match status" value="1"/>
</dbReference>
<dbReference type="SUPFAM" id="SSF52540">
    <property type="entry name" value="P-loop containing nucleoside triphosphate hydrolases"/>
    <property type="match status" value="1"/>
</dbReference>
<dbReference type="PROSITE" id="PS51706">
    <property type="entry name" value="G_ENGB"/>
    <property type="match status" value="1"/>
</dbReference>